<feature type="chain" id="PRO_1000030445" description="D-alanine--D-alanine ligase">
    <location>
        <begin position="1"/>
        <end position="308"/>
    </location>
</feature>
<feature type="domain" description="ATP-grasp" evidence="2">
    <location>
        <begin position="100"/>
        <end position="295"/>
    </location>
</feature>
<feature type="binding site" evidence="2">
    <location>
        <begin position="127"/>
        <end position="180"/>
    </location>
    <ligand>
        <name>ATP</name>
        <dbReference type="ChEBI" id="CHEBI:30616"/>
    </ligand>
</feature>
<feature type="binding site" evidence="2">
    <location>
        <position position="249"/>
    </location>
    <ligand>
        <name>Mg(2+)</name>
        <dbReference type="ChEBI" id="CHEBI:18420"/>
        <label>1</label>
    </ligand>
</feature>
<feature type="binding site" evidence="2">
    <location>
        <position position="262"/>
    </location>
    <ligand>
        <name>Mg(2+)</name>
        <dbReference type="ChEBI" id="CHEBI:18420"/>
        <label>1</label>
    </ligand>
</feature>
<feature type="binding site" evidence="2">
    <location>
        <position position="262"/>
    </location>
    <ligand>
        <name>Mg(2+)</name>
        <dbReference type="ChEBI" id="CHEBI:18420"/>
        <label>2</label>
    </ligand>
</feature>
<feature type="binding site" evidence="2">
    <location>
        <position position="264"/>
    </location>
    <ligand>
        <name>Mg(2+)</name>
        <dbReference type="ChEBI" id="CHEBI:18420"/>
        <label>2</label>
    </ligand>
</feature>
<protein>
    <recommendedName>
        <fullName evidence="2">D-alanine--D-alanine ligase</fullName>
        <ecNumber evidence="2">6.3.2.4</ecNumber>
    </recommendedName>
    <alternativeName>
        <fullName evidence="2">D-Ala-D-Ala ligase</fullName>
    </alternativeName>
    <alternativeName>
        <fullName evidence="2">D-alanylalanine synthetase</fullName>
    </alternativeName>
</protein>
<proteinExistence type="inferred from homology"/>
<gene>
    <name evidence="2" type="primary">ddl</name>
    <name type="ordered locus">Dde_0366</name>
</gene>
<sequence>MRILLIAGGWSEERDVSLSGARGIHAALERLGHQVTLFDPCRTLAGLLEAAQAHDFAFLNLHGQPGEDGLVQALLETAGVPYQGSGPAGSFLALNKAAAKEVFVRNGLPTPEWVFLPAHPGADWEPPFAFPAFIKSNNGGSSLALHRVSCPGELARALDELFTRGGEAIIEPAVEGVEVTCGVLGDEALPPILIRPLGAGFFDYASKYTPGQAEELCPAPLPGEVTAKVREYALRAHRALGLRGYSRSDFILTPAGALSLLEVNTLPGMTATSLLPQEAAAVGISFDGLIGRLIELGLAAHGKQQEKA</sequence>
<reference key="1">
    <citation type="journal article" date="2011" name="J. Bacteriol.">
        <title>Complete genome sequence and updated annotation of Desulfovibrio alaskensis G20.</title>
        <authorList>
            <person name="Hauser L.J."/>
            <person name="Land M.L."/>
            <person name="Brown S.D."/>
            <person name="Larimer F."/>
            <person name="Keller K.L."/>
            <person name="Rapp-Giles B.J."/>
            <person name="Price M.N."/>
            <person name="Lin M."/>
            <person name="Bruce D.C."/>
            <person name="Detter J.C."/>
            <person name="Tapia R."/>
            <person name="Han C.S."/>
            <person name="Goodwin L.A."/>
            <person name="Cheng J.F."/>
            <person name="Pitluck S."/>
            <person name="Copeland A."/>
            <person name="Lucas S."/>
            <person name="Nolan M."/>
            <person name="Lapidus A.L."/>
            <person name="Palumbo A.V."/>
            <person name="Wall J.D."/>
        </authorList>
    </citation>
    <scope>NUCLEOTIDE SEQUENCE [LARGE SCALE GENOMIC DNA]</scope>
    <source>
        <strain>ATCC BAA-1058 / DSM 17464 / G20</strain>
    </source>
</reference>
<dbReference type="EC" id="6.3.2.4" evidence="2"/>
<dbReference type="EMBL" id="CP000112">
    <property type="protein sequence ID" value="ABB37167.1"/>
    <property type="molecule type" value="Genomic_DNA"/>
</dbReference>
<dbReference type="RefSeq" id="WP_011366505.1">
    <property type="nucleotide sequence ID" value="NC_007519.1"/>
</dbReference>
<dbReference type="SMR" id="Q316H9"/>
<dbReference type="STRING" id="207559.Dde_0366"/>
<dbReference type="KEGG" id="dde:Dde_0366"/>
<dbReference type="eggNOG" id="COG1181">
    <property type="taxonomic scope" value="Bacteria"/>
</dbReference>
<dbReference type="HOGENOM" id="CLU_039268_1_1_7"/>
<dbReference type="UniPathway" id="UPA00219"/>
<dbReference type="Proteomes" id="UP000002710">
    <property type="component" value="Chromosome"/>
</dbReference>
<dbReference type="GO" id="GO:0005737">
    <property type="term" value="C:cytoplasm"/>
    <property type="evidence" value="ECO:0007669"/>
    <property type="project" value="UniProtKB-SubCell"/>
</dbReference>
<dbReference type="GO" id="GO:0005524">
    <property type="term" value="F:ATP binding"/>
    <property type="evidence" value="ECO:0007669"/>
    <property type="project" value="UniProtKB-KW"/>
</dbReference>
<dbReference type="GO" id="GO:0008716">
    <property type="term" value="F:D-alanine-D-alanine ligase activity"/>
    <property type="evidence" value="ECO:0007669"/>
    <property type="project" value="UniProtKB-UniRule"/>
</dbReference>
<dbReference type="GO" id="GO:0046872">
    <property type="term" value="F:metal ion binding"/>
    <property type="evidence" value="ECO:0007669"/>
    <property type="project" value="UniProtKB-KW"/>
</dbReference>
<dbReference type="GO" id="GO:0071555">
    <property type="term" value="P:cell wall organization"/>
    <property type="evidence" value="ECO:0007669"/>
    <property type="project" value="UniProtKB-KW"/>
</dbReference>
<dbReference type="GO" id="GO:0009252">
    <property type="term" value="P:peptidoglycan biosynthetic process"/>
    <property type="evidence" value="ECO:0007669"/>
    <property type="project" value="UniProtKB-UniRule"/>
</dbReference>
<dbReference type="GO" id="GO:0008360">
    <property type="term" value="P:regulation of cell shape"/>
    <property type="evidence" value="ECO:0007669"/>
    <property type="project" value="UniProtKB-KW"/>
</dbReference>
<dbReference type="Gene3D" id="3.40.50.20">
    <property type="match status" value="1"/>
</dbReference>
<dbReference type="Gene3D" id="3.30.1490.20">
    <property type="entry name" value="ATP-grasp fold, A domain"/>
    <property type="match status" value="1"/>
</dbReference>
<dbReference type="Gene3D" id="3.30.470.20">
    <property type="entry name" value="ATP-grasp fold, B domain"/>
    <property type="match status" value="1"/>
</dbReference>
<dbReference type="HAMAP" id="MF_00047">
    <property type="entry name" value="Dala_Dala_lig"/>
    <property type="match status" value="1"/>
</dbReference>
<dbReference type="InterPro" id="IPR011761">
    <property type="entry name" value="ATP-grasp"/>
</dbReference>
<dbReference type="InterPro" id="IPR013815">
    <property type="entry name" value="ATP_grasp_subdomain_1"/>
</dbReference>
<dbReference type="InterPro" id="IPR000291">
    <property type="entry name" value="D-Ala_lig_Van_CS"/>
</dbReference>
<dbReference type="InterPro" id="IPR005905">
    <property type="entry name" value="D_ala_D_ala"/>
</dbReference>
<dbReference type="InterPro" id="IPR011095">
    <property type="entry name" value="Dala_Dala_lig_C"/>
</dbReference>
<dbReference type="InterPro" id="IPR011127">
    <property type="entry name" value="Dala_Dala_lig_N"/>
</dbReference>
<dbReference type="InterPro" id="IPR016185">
    <property type="entry name" value="PreATP-grasp_dom_sf"/>
</dbReference>
<dbReference type="NCBIfam" id="TIGR01205">
    <property type="entry name" value="D_ala_D_alaTIGR"/>
    <property type="match status" value="1"/>
</dbReference>
<dbReference type="NCBIfam" id="NF002378">
    <property type="entry name" value="PRK01372.1"/>
    <property type="match status" value="1"/>
</dbReference>
<dbReference type="PANTHER" id="PTHR23132">
    <property type="entry name" value="D-ALANINE--D-ALANINE LIGASE"/>
    <property type="match status" value="1"/>
</dbReference>
<dbReference type="PANTHER" id="PTHR23132:SF23">
    <property type="entry name" value="D-ALANINE--D-ALANINE LIGASE B"/>
    <property type="match status" value="1"/>
</dbReference>
<dbReference type="Pfam" id="PF07478">
    <property type="entry name" value="Dala_Dala_lig_C"/>
    <property type="match status" value="1"/>
</dbReference>
<dbReference type="Pfam" id="PF01820">
    <property type="entry name" value="Dala_Dala_lig_N"/>
    <property type="match status" value="1"/>
</dbReference>
<dbReference type="PIRSF" id="PIRSF039102">
    <property type="entry name" value="Ddl/VanB"/>
    <property type="match status" value="1"/>
</dbReference>
<dbReference type="SUPFAM" id="SSF56059">
    <property type="entry name" value="Glutathione synthetase ATP-binding domain-like"/>
    <property type="match status" value="1"/>
</dbReference>
<dbReference type="SUPFAM" id="SSF52440">
    <property type="entry name" value="PreATP-grasp domain"/>
    <property type="match status" value="1"/>
</dbReference>
<dbReference type="PROSITE" id="PS50975">
    <property type="entry name" value="ATP_GRASP"/>
    <property type="match status" value="1"/>
</dbReference>
<dbReference type="PROSITE" id="PS00843">
    <property type="entry name" value="DALA_DALA_LIGASE_1"/>
    <property type="match status" value="1"/>
</dbReference>
<dbReference type="PROSITE" id="PS00844">
    <property type="entry name" value="DALA_DALA_LIGASE_2"/>
    <property type="match status" value="1"/>
</dbReference>
<keyword id="KW-0067">ATP-binding</keyword>
<keyword id="KW-0133">Cell shape</keyword>
<keyword id="KW-0961">Cell wall biogenesis/degradation</keyword>
<keyword id="KW-0963">Cytoplasm</keyword>
<keyword id="KW-0436">Ligase</keyword>
<keyword id="KW-0460">Magnesium</keyword>
<keyword id="KW-0464">Manganese</keyword>
<keyword id="KW-0479">Metal-binding</keyword>
<keyword id="KW-0547">Nucleotide-binding</keyword>
<keyword id="KW-0573">Peptidoglycan synthesis</keyword>
<keyword id="KW-1185">Reference proteome</keyword>
<organism>
    <name type="scientific">Oleidesulfovibrio alaskensis (strain ATCC BAA-1058 / DSM 17464 / G20)</name>
    <name type="common">Desulfovibrio alaskensis</name>
    <dbReference type="NCBI Taxonomy" id="207559"/>
    <lineage>
        <taxon>Bacteria</taxon>
        <taxon>Pseudomonadati</taxon>
        <taxon>Thermodesulfobacteriota</taxon>
        <taxon>Desulfovibrionia</taxon>
        <taxon>Desulfovibrionales</taxon>
        <taxon>Desulfovibrionaceae</taxon>
        <taxon>Oleidesulfovibrio</taxon>
    </lineage>
</organism>
<evidence type="ECO:0000250" key="1"/>
<evidence type="ECO:0000255" key="2">
    <source>
        <dbReference type="HAMAP-Rule" id="MF_00047"/>
    </source>
</evidence>
<accession>Q316H9</accession>
<name>DDL_OLEA2</name>
<comment type="function">
    <text evidence="2">Cell wall formation.</text>
</comment>
<comment type="catalytic activity">
    <reaction evidence="2">
        <text>2 D-alanine + ATP = D-alanyl-D-alanine + ADP + phosphate + H(+)</text>
        <dbReference type="Rhea" id="RHEA:11224"/>
        <dbReference type="ChEBI" id="CHEBI:15378"/>
        <dbReference type="ChEBI" id="CHEBI:30616"/>
        <dbReference type="ChEBI" id="CHEBI:43474"/>
        <dbReference type="ChEBI" id="CHEBI:57416"/>
        <dbReference type="ChEBI" id="CHEBI:57822"/>
        <dbReference type="ChEBI" id="CHEBI:456216"/>
        <dbReference type="EC" id="6.3.2.4"/>
    </reaction>
</comment>
<comment type="cofactor">
    <cofactor evidence="1">
        <name>Mg(2+)</name>
        <dbReference type="ChEBI" id="CHEBI:18420"/>
    </cofactor>
    <cofactor evidence="1">
        <name>Mn(2+)</name>
        <dbReference type="ChEBI" id="CHEBI:29035"/>
    </cofactor>
    <text evidence="1">Binds 2 magnesium or manganese ions per subunit.</text>
</comment>
<comment type="pathway">
    <text evidence="2">Cell wall biogenesis; peptidoglycan biosynthesis.</text>
</comment>
<comment type="subcellular location">
    <subcellularLocation>
        <location evidence="2">Cytoplasm</location>
    </subcellularLocation>
</comment>
<comment type="similarity">
    <text evidence="2">Belongs to the D-alanine--D-alanine ligase family.</text>
</comment>